<proteinExistence type="inferred from homology"/>
<name>RPO6_THEAC</name>
<organism>
    <name type="scientific">Thermoplasma acidophilum (strain ATCC 25905 / DSM 1728 / JCM 9062 / NBRC 15155 / AMRC-C165)</name>
    <dbReference type="NCBI Taxonomy" id="273075"/>
    <lineage>
        <taxon>Archaea</taxon>
        <taxon>Methanobacteriati</taxon>
        <taxon>Thermoplasmatota</taxon>
        <taxon>Thermoplasmata</taxon>
        <taxon>Thermoplasmatales</taxon>
        <taxon>Thermoplasmataceae</taxon>
        <taxon>Thermoplasma</taxon>
    </lineage>
</organism>
<keyword id="KW-0963">Cytoplasm</keyword>
<keyword id="KW-0240">DNA-directed RNA polymerase</keyword>
<keyword id="KW-0548">Nucleotidyltransferase</keyword>
<keyword id="KW-1185">Reference proteome</keyword>
<keyword id="KW-0804">Transcription</keyword>
<keyword id="KW-0808">Transferase</keyword>
<evidence type="ECO:0000255" key="1">
    <source>
        <dbReference type="HAMAP-Rule" id="MF_00192"/>
    </source>
</evidence>
<comment type="function">
    <text evidence="1">DNA-dependent RNA polymerase (RNAP) catalyzes the transcription of DNA into RNA using the four ribonucleoside triphosphates as substrates.</text>
</comment>
<comment type="catalytic activity">
    <reaction evidence="1">
        <text>RNA(n) + a ribonucleoside 5'-triphosphate = RNA(n+1) + diphosphate</text>
        <dbReference type="Rhea" id="RHEA:21248"/>
        <dbReference type="Rhea" id="RHEA-COMP:14527"/>
        <dbReference type="Rhea" id="RHEA-COMP:17342"/>
        <dbReference type="ChEBI" id="CHEBI:33019"/>
        <dbReference type="ChEBI" id="CHEBI:61557"/>
        <dbReference type="ChEBI" id="CHEBI:140395"/>
        <dbReference type="EC" id="2.7.7.6"/>
    </reaction>
</comment>
<comment type="subunit">
    <text evidence="1">Part of the RNA polymerase complex.</text>
</comment>
<comment type="subcellular location">
    <subcellularLocation>
        <location evidence="1">Cytoplasm</location>
    </subcellularLocation>
</comment>
<comment type="similarity">
    <text evidence="1">Belongs to the archaeal Rpo6/eukaryotic RPB6 RNA polymerase subunit family.</text>
</comment>
<gene>
    <name evidence="1" type="primary">rpo6</name>
    <name evidence="1" type="synonym">rpoK</name>
    <name type="ordered locus">Ta1160</name>
</gene>
<protein>
    <recommendedName>
        <fullName evidence="1">DNA-directed RNA polymerase subunit Rpo6</fullName>
        <ecNumber evidence="1">2.7.7.6</ecNumber>
    </recommendedName>
    <alternativeName>
        <fullName evidence="1">DNA-directed RNA polymerase subunit K</fullName>
    </alternativeName>
</protein>
<feature type="chain" id="PRO_0000133825" description="DNA-directed RNA polymerase subunit Rpo6">
    <location>
        <begin position="1"/>
        <end position="61"/>
    </location>
</feature>
<sequence>MKYTKFEKARIIGARALQIAMGAPVIIDVPKNIIDPVDIAMLEFENNVIPITIKKASKILN</sequence>
<dbReference type="EC" id="2.7.7.6" evidence="1"/>
<dbReference type="EMBL" id="AL445066">
    <property type="protein sequence ID" value="CAC12285.1"/>
    <property type="molecule type" value="Genomic_DNA"/>
</dbReference>
<dbReference type="RefSeq" id="WP_010901567.1">
    <property type="nucleotide sequence ID" value="NC_002578.1"/>
</dbReference>
<dbReference type="SMR" id="Q9HJ14"/>
<dbReference type="FunCoup" id="Q9HJ14">
    <property type="interactions" value="7"/>
</dbReference>
<dbReference type="STRING" id="273075.gene:9572381"/>
<dbReference type="PaxDb" id="273075-Ta1160"/>
<dbReference type="EnsemblBacteria" id="CAC12285">
    <property type="protein sequence ID" value="CAC12285"/>
    <property type="gene ID" value="CAC12285"/>
</dbReference>
<dbReference type="KEGG" id="tac:Ta1160"/>
<dbReference type="eggNOG" id="arCOG01268">
    <property type="taxonomic scope" value="Archaea"/>
</dbReference>
<dbReference type="HOGENOM" id="CLU_112527_5_0_2"/>
<dbReference type="InParanoid" id="Q9HJ14"/>
<dbReference type="OrthoDB" id="10567at2157"/>
<dbReference type="Proteomes" id="UP000001024">
    <property type="component" value="Chromosome"/>
</dbReference>
<dbReference type="GO" id="GO:0005737">
    <property type="term" value="C:cytoplasm"/>
    <property type="evidence" value="ECO:0007669"/>
    <property type="project" value="UniProtKB-SubCell"/>
</dbReference>
<dbReference type="GO" id="GO:0000428">
    <property type="term" value="C:DNA-directed RNA polymerase complex"/>
    <property type="evidence" value="ECO:0007669"/>
    <property type="project" value="UniProtKB-KW"/>
</dbReference>
<dbReference type="GO" id="GO:0003677">
    <property type="term" value="F:DNA binding"/>
    <property type="evidence" value="ECO:0007669"/>
    <property type="project" value="UniProtKB-UniRule"/>
</dbReference>
<dbReference type="GO" id="GO:0003899">
    <property type="term" value="F:DNA-directed RNA polymerase activity"/>
    <property type="evidence" value="ECO:0007669"/>
    <property type="project" value="UniProtKB-UniRule"/>
</dbReference>
<dbReference type="GO" id="GO:0006360">
    <property type="term" value="P:transcription by RNA polymerase I"/>
    <property type="evidence" value="ECO:0007669"/>
    <property type="project" value="TreeGrafter"/>
</dbReference>
<dbReference type="GO" id="GO:0006366">
    <property type="term" value="P:transcription by RNA polymerase II"/>
    <property type="evidence" value="ECO:0007669"/>
    <property type="project" value="TreeGrafter"/>
</dbReference>
<dbReference type="GO" id="GO:0042797">
    <property type="term" value="P:tRNA transcription by RNA polymerase III"/>
    <property type="evidence" value="ECO:0007669"/>
    <property type="project" value="TreeGrafter"/>
</dbReference>
<dbReference type="Gene3D" id="3.90.940.10">
    <property type="match status" value="1"/>
</dbReference>
<dbReference type="HAMAP" id="MF_00192">
    <property type="entry name" value="RNApol_arch_Rpo6"/>
    <property type="match status" value="1"/>
</dbReference>
<dbReference type="InterPro" id="IPR020708">
    <property type="entry name" value="DNA-dir_RNA_polK_14-18kDa_CS"/>
</dbReference>
<dbReference type="InterPro" id="IPR006110">
    <property type="entry name" value="Pol_omega/Rpo6/RPB6"/>
</dbReference>
<dbReference type="InterPro" id="IPR036161">
    <property type="entry name" value="RPB6/omega-like_sf"/>
</dbReference>
<dbReference type="InterPro" id="IPR006111">
    <property type="entry name" value="Rpo6/Rpb6"/>
</dbReference>
<dbReference type="NCBIfam" id="NF002208">
    <property type="entry name" value="PRK01099.1-3"/>
    <property type="match status" value="1"/>
</dbReference>
<dbReference type="PANTHER" id="PTHR47227">
    <property type="entry name" value="DNA-DIRECTED RNA POLYMERASE SUBUNIT K"/>
    <property type="match status" value="1"/>
</dbReference>
<dbReference type="PANTHER" id="PTHR47227:SF5">
    <property type="entry name" value="DNA-DIRECTED RNA POLYMERASES I, II, AND III SUBUNIT RPABC2"/>
    <property type="match status" value="1"/>
</dbReference>
<dbReference type="Pfam" id="PF01192">
    <property type="entry name" value="RNA_pol_Rpb6"/>
    <property type="match status" value="1"/>
</dbReference>
<dbReference type="PIRSF" id="PIRSF000778">
    <property type="entry name" value="RpoK/RPB6"/>
    <property type="match status" value="1"/>
</dbReference>
<dbReference type="SMART" id="SM01409">
    <property type="entry name" value="RNA_pol_Rpb6"/>
    <property type="match status" value="1"/>
</dbReference>
<dbReference type="SUPFAM" id="SSF63562">
    <property type="entry name" value="RPB6/omega subunit-like"/>
    <property type="match status" value="1"/>
</dbReference>
<dbReference type="PROSITE" id="PS01111">
    <property type="entry name" value="RNA_POL_K_14KD"/>
    <property type="match status" value="1"/>
</dbReference>
<accession>Q9HJ14</accession>
<reference key="1">
    <citation type="journal article" date="2000" name="Nature">
        <title>The genome sequence of the thermoacidophilic scavenger Thermoplasma acidophilum.</title>
        <authorList>
            <person name="Ruepp A."/>
            <person name="Graml W."/>
            <person name="Santos-Martinez M.-L."/>
            <person name="Koretke K.K."/>
            <person name="Volker C."/>
            <person name="Mewes H.-W."/>
            <person name="Frishman D."/>
            <person name="Stocker S."/>
            <person name="Lupas A.N."/>
            <person name="Baumeister W."/>
        </authorList>
    </citation>
    <scope>NUCLEOTIDE SEQUENCE [LARGE SCALE GENOMIC DNA]</scope>
    <source>
        <strain>ATCC 25905 / DSM 1728 / JCM 9062 / NBRC 15155 / AMRC-C165</strain>
    </source>
</reference>